<gene>
    <name type="primary">y13J</name>
    <name type="synonym">pseT.2</name>
</gene>
<keyword id="KW-0204">Cytolysis</keyword>
<keyword id="KW-0578">Host cell lysis by virus</keyword>
<keyword id="KW-1033">Host cell outer membrane</keyword>
<keyword id="KW-1043">Host membrane</keyword>
<keyword id="KW-0449">Lipoprotein</keyword>
<keyword id="KW-0472">Membrane</keyword>
<keyword id="KW-0564">Palmitate</keyword>
<keyword id="KW-1185">Reference proteome</keyword>
<keyword id="KW-0732">Signal</keyword>
<keyword id="KW-1188">Viral release from host cell</keyword>
<proteinExistence type="inferred from homology"/>
<evidence type="ECO:0000250" key="1"/>
<evidence type="ECO:0000255" key="2"/>
<evidence type="ECO:0000269" key="3">
    <source>
    </source>
</evidence>
<protein>
    <recommendedName>
        <fullName>Spanin, outer lipoprotein subunit</fullName>
        <shortName>o-spanin</shortName>
    </recommendedName>
</protein>
<comment type="function">
    <text evidence="1 3">Component of the spanin complex that disrupts the host outer membrane and participates in cell lysis during virus exit. The spanin complex conducts the final step in host lysis by disrupting the outer membrane after holin and endolysin action have permeabilized the inner membrane and degraded the host peptidoglycans. Host outer membrane disruption is possibly due to local fusion between the inner and outer membrane performed by the spanin complex (By similarity).</text>
</comment>
<comment type="subunit">
    <text evidence="1">Interacts (via C-terminus) with the spanin inner membrane subunit (via C-terminus). Part of the spanin complex which spans the entire periplasmic space. The spanin complex is composed of spanin inner membrane subunit and spanin outer membrane subunit (By similarity).</text>
</comment>
<comment type="subcellular location">
    <subcellularLocation>
        <location evidence="1">Host cell outer membrane</location>
        <topology evidence="1">Lipid-anchor</topology>
        <orientation evidence="1">Periplasmic side</orientation>
    </subcellularLocation>
</comment>
<organismHost>
    <name type="scientific">Escherichia coli</name>
    <dbReference type="NCBI Taxonomy" id="562"/>
</organismHost>
<organism>
    <name type="scientific">Enterobacteria phage T4</name>
    <name type="common">Bacteriophage T4</name>
    <dbReference type="NCBI Taxonomy" id="10665"/>
    <lineage>
        <taxon>Viruses</taxon>
        <taxon>Duplodnaviria</taxon>
        <taxon>Heunggongvirae</taxon>
        <taxon>Uroviricota</taxon>
        <taxon>Caudoviricetes</taxon>
        <taxon>Straboviridae</taxon>
        <taxon>Tevenvirinae</taxon>
        <taxon>Tequatrovirus</taxon>
    </lineage>
</organism>
<accession>P39503</accession>
<accession>Q9T0T4</accession>
<reference key="1">
    <citation type="journal article" date="2003" name="Microbiol. Mol. Biol. Rev.">
        <title>Bacteriophage T4 genome.</title>
        <authorList>
            <person name="Miller E.S."/>
            <person name="Kutter E."/>
            <person name="Mosig G."/>
            <person name="Arisaka F."/>
            <person name="Kunisawa T."/>
            <person name="Ruger W."/>
        </authorList>
    </citation>
    <scope>NUCLEOTIDE SEQUENCE [LARGE SCALE GENOMIC DNA]</scope>
</reference>
<reference key="2">
    <citation type="journal article" date="2007" name="J. Mol. Biol.">
        <title>Rz/Rz1 lysis gene equivalents in phages of Gram-negative hosts.</title>
        <authorList>
            <person name="Summer E.J."/>
            <person name="Berry J."/>
            <person name="Tran T.A."/>
            <person name="Niu L."/>
            <person name="Struck D.K."/>
            <person name="Young R."/>
        </authorList>
    </citation>
    <scope>FUNCTION</scope>
</reference>
<feature type="signal peptide" evidence="2">
    <location>
        <begin position="1"/>
        <end position="16"/>
    </location>
</feature>
<feature type="chain" id="PRO_0000165183" description="Spanin, outer lipoprotein subunit">
    <location>
        <begin position="17"/>
        <end position="99"/>
    </location>
</feature>
<feature type="topological domain" description="Periplasmic" evidence="2">
    <location>
        <begin position="18"/>
        <end position="99"/>
    </location>
</feature>
<feature type="lipid moiety-binding region" description="N-palmitoyl cysteine; by host" evidence="1">
    <location>
        <position position="17"/>
    </location>
</feature>
<feature type="lipid moiety-binding region" description="S-diacylglycerol cysteine; by host" evidence="1">
    <location>
        <position position="17"/>
    </location>
</feature>
<name>SPAN2_BPT4</name>
<sequence length="99" mass="11628">MIKLSAVILSIGLLVGCSTKPLEVKKETVHPNWPVQIKSYDEAKLSWQVKVIDGKAWVGMPFEDSQEFRIWLNDVKRYVHDQKTMXCYYRQELKEDKCK</sequence>
<dbReference type="EMBL" id="AF158101">
    <property type="protein sequence ID" value="AAD42644.2"/>
    <property type="molecule type" value="Genomic_DNA"/>
</dbReference>
<dbReference type="RefSeq" id="NP_049836.2">
    <property type="nucleotide sequence ID" value="NC_000866.4"/>
</dbReference>
<dbReference type="TCDB" id="1.M.1.5.1">
    <property type="family name" value="the rz/rz1 spanin1 (rz(1)) family"/>
</dbReference>
<dbReference type="GeneID" id="1258607"/>
<dbReference type="KEGG" id="vg:1258607"/>
<dbReference type="OrthoDB" id="19710at10239"/>
<dbReference type="Proteomes" id="UP000009087">
    <property type="component" value="Segment"/>
</dbReference>
<dbReference type="GO" id="GO:0020002">
    <property type="term" value="C:host cell plasma membrane"/>
    <property type="evidence" value="ECO:0007669"/>
    <property type="project" value="UniProtKB-SubCell"/>
</dbReference>
<dbReference type="GO" id="GO:0016020">
    <property type="term" value="C:membrane"/>
    <property type="evidence" value="ECO:0007669"/>
    <property type="project" value="UniProtKB-KW"/>
</dbReference>
<dbReference type="GO" id="GO:0044659">
    <property type="term" value="P:viral release from host cell by cytolysis"/>
    <property type="evidence" value="ECO:0000316"/>
    <property type="project" value="CACAO"/>
</dbReference>